<gene>
    <name evidence="1" type="primary">upp</name>
    <name type="ordered locus">spr0655</name>
</gene>
<keyword id="KW-0021">Allosteric enzyme</keyword>
<keyword id="KW-0328">Glycosyltransferase</keyword>
<keyword id="KW-0342">GTP-binding</keyword>
<keyword id="KW-0460">Magnesium</keyword>
<keyword id="KW-0547">Nucleotide-binding</keyword>
<keyword id="KW-1185">Reference proteome</keyword>
<keyword id="KW-0808">Transferase</keyword>
<organism>
    <name type="scientific">Streptococcus pneumoniae (strain ATCC BAA-255 / R6)</name>
    <dbReference type="NCBI Taxonomy" id="171101"/>
    <lineage>
        <taxon>Bacteria</taxon>
        <taxon>Bacillati</taxon>
        <taxon>Bacillota</taxon>
        <taxon>Bacilli</taxon>
        <taxon>Lactobacillales</taxon>
        <taxon>Streptococcaceae</taxon>
        <taxon>Streptococcus</taxon>
    </lineage>
</organism>
<comment type="function">
    <text evidence="1">Catalyzes the conversion of uracil and 5-phospho-alpha-D-ribose 1-diphosphate (PRPP) to UMP and diphosphate.</text>
</comment>
<comment type="catalytic activity">
    <reaction evidence="1">
        <text>UMP + diphosphate = 5-phospho-alpha-D-ribose 1-diphosphate + uracil</text>
        <dbReference type="Rhea" id="RHEA:13017"/>
        <dbReference type="ChEBI" id="CHEBI:17568"/>
        <dbReference type="ChEBI" id="CHEBI:33019"/>
        <dbReference type="ChEBI" id="CHEBI:57865"/>
        <dbReference type="ChEBI" id="CHEBI:58017"/>
        <dbReference type="EC" id="2.4.2.9"/>
    </reaction>
</comment>
<comment type="cofactor">
    <cofactor evidence="1">
        <name>Mg(2+)</name>
        <dbReference type="ChEBI" id="CHEBI:18420"/>
    </cofactor>
    <text evidence="1">Binds 1 Mg(2+) ion per subunit. The magnesium is bound as Mg-PRPP.</text>
</comment>
<comment type="activity regulation">
    <text evidence="1">Allosterically activated by GTP.</text>
</comment>
<comment type="pathway">
    <text evidence="1">Pyrimidine metabolism; UMP biosynthesis via salvage pathway; UMP from uracil: step 1/1.</text>
</comment>
<comment type="similarity">
    <text evidence="1">Belongs to the UPRTase family.</text>
</comment>
<comment type="sequence caution" evidence="2">
    <conflict type="erroneous initiation">
        <sequence resource="EMBL-CDS" id="AAK99459"/>
    </conflict>
</comment>
<dbReference type="EC" id="2.4.2.9" evidence="1"/>
<dbReference type="EMBL" id="AE007317">
    <property type="protein sequence ID" value="AAK99459.1"/>
    <property type="status" value="ALT_INIT"/>
    <property type="molecule type" value="Genomic_DNA"/>
</dbReference>
<dbReference type="PIR" id="G97953">
    <property type="entry name" value="G97953"/>
</dbReference>
<dbReference type="RefSeq" id="NP_358249.1">
    <property type="nucleotide sequence ID" value="NC_003098.1"/>
</dbReference>
<dbReference type="RefSeq" id="WP_000515974.1">
    <property type="nucleotide sequence ID" value="NC_003098.1"/>
</dbReference>
<dbReference type="SMR" id="Q8DQI3"/>
<dbReference type="STRING" id="171101.spr0655"/>
<dbReference type="GeneID" id="93739377"/>
<dbReference type="KEGG" id="spr:spr0655"/>
<dbReference type="PATRIC" id="fig|171101.6.peg.727"/>
<dbReference type="eggNOG" id="COG0035">
    <property type="taxonomic scope" value="Bacteria"/>
</dbReference>
<dbReference type="HOGENOM" id="CLU_067096_2_2_9"/>
<dbReference type="UniPathway" id="UPA00574">
    <property type="reaction ID" value="UER00636"/>
</dbReference>
<dbReference type="Proteomes" id="UP000000586">
    <property type="component" value="Chromosome"/>
</dbReference>
<dbReference type="GO" id="GO:0005737">
    <property type="term" value="C:cytoplasm"/>
    <property type="evidence" value="ECO:0000318"/>
    <property type="project" value="GO_Central"/>
</dbReference>
<dbReference type="GO" id="GO:0005525">
    <property type="term" value="F:GTP binding"/>
    <property type="evidence" value="ECO:0007669"/>
    <property type="project" value="UniProtKB-KW"/>
</dbReference>
<dbReference type="GO" id="GO:0000287">
    <property type="term" value="F:magnesium ion binding"/>
    <property type="evidence" value="ECO:0007669"/>
    <property type="project" value="UniProtKB-UniRule"/>
</dbReference>
<dbReference type="GO" id="GO:0004845">
    <property type="term" value="F:uracil phosphoribosyltransferase activity"/>
    <property type="evidence" value="ECO:0000318"/>
    <property type="project" value="GO_Central"/>
</dbReference>
<dbReference type="GO" id="GO:0044206">
    <property type="term" value="P:UMP salvage"/>
    <property type="evidence" value="ECO:0007669"/>
    <property type="project" value="UniProtKB-UniRule"/>
</dbReference>
<dbReference type="GO" id="GO:0006223">
    <property type="term" value="P:uracil salvage"/>
    <property type="evidence" value="ECO:0007669"/>
    <property type="project" value="InterPro"/>
</dbReference>
<dbReference type="CDD" id="cd06223">
    <property type="entry name" value="PRTases_typeI"/>
    <property type="match status" value="1"/>
</dbReference>
<dbReference type="FunFam" id="3.40.50.2020:FF:000003">
    <property type="entry name" value="Uracil phosphoribosyltransferase"/>
    <property type="match status" value="1"/>
</dbReference>
<dbReference type="Gene3D" id="3.40.50.2020">
    <property type="match status" value="1"/>
</dbReference>
<dbReference type="HAMAP" id="MF_01218_B">
    <property type="entry name" value="Upp_B"/>
    <property type="match status" value="1"/>
</dbReference>
<dbReference type="InterPro" id="IPR000836">
    <property type="entry name" value="PRibTrfase_dom"/>
</dbReference>
<dbReference type="InterPro" id="IPR029057">
    <property type="entry name" value="PRTase-like"/>
</dbReference>
<dbReference type="InterPro" id="IPR034332">
    <property type="entry name" value="Upp_B"/>
</dbReference>
<dbReference type="InterPro" id="IPR050054">
    <property type="entry name" value="UPRTase/APRTase"/>
</dbReference>
<dbReference type="InterPro" id="IPR005765">
    <property type="entry name" value="Ura_phspho_trans"/>
</dbReference>
<dbReference type="NCBIfam" id="NF001097">
    <property type="entry name" value="PRK00129.1"/>
    <property type="match status" value="1"/>
</dbReference>
<dbReference type="NCBIfam" id="TIGR01091">
    <property type="entry name" value="upp"/>
    <property type="match status" value="1"/>
</dbReference>
<dbReference type="PANTHER" id="PTHR32315">
    <property type="entry name" value="ADENINE PHOSPHORIBOSYLTRANSFERASE"/>
    <property type="match status" value="1"/>
</dbReference>
<dbReference type="PANTHER" id="PTHR32315:SF4">
    <property type="entry name" value="URACIL PHOSPHORIBOSYLTRANSFERASE, CHLOROPLASTIC"/>
    <property type="match status" value="1"/>
</dbReference>
<dbReference type="Pfam" id="PF14681">
    <property type="entry name" value="UPRTase"/>
    <property type="match status" value="1"/>
</dbReference>
<dbReference type="SUPFAM" id="SSF53271">
    <property type="entry name" value="PRTase-like"/>
    <property type="match status" value="1"/>
</dbReference>
<accession>Q8DQI3</accession>
<evidence type="ECO:0000255" key="1">
    <source>
        <dbReference type="HAMAP-Rule" id="MF_01218"/>
    </source>
</evidence>
<evidence type="ECO:0000305" key="2"/>
<feature type="chain" id="PRO_0000120895" description="Uracil phosphoribosyltransferase">
    <location>
        <begin position="1"/>
        <end position="209"/>
    </location>
</feature>
<feature type="binding site" evidence="1">
    <location>
        <position position="79"/>
    </location>
    <ligand>
        <name>5-phospho-alpha-D-ribose 1-diphosphate</name>
        <dbReference type="ChEBI" id="CHEBI:58017"/>
    </ligand>
</feature>
<feature type="binding site" evidence="1">
    <location>
        <position position="104"/>
    </location>
    <ligand>
        <name>5-phospho-alpha-D-ribose 1-diphosphate</name>
        <dbReference type="ChEBI" id="CHEBI:58017"/>
    </ligand>
</feature>
<feature type="binding site" evidence="1">
    <location>
        <begin position="131"/>
        <end position="139"/>
    </location>
    <ligand>
        <name>5-phospho-alpha-D-ribose 1-diphosphate</name>
        <dbReference type="ChEBI" id="CHEBI:58017"/>
    </ligand>
</feature>
<feature type="binding site" evidence="1">
    <location>
        <position position="194"/>
    </location>
    <ligand>
        <name>uracil</name>
        <dbReference type="ChEBI" id="CHEBI:17568"/>
    </ligand>
</feature>
<feature type="binding site" evidence="1">
    <location>
        <begin position="199"/>
        <end position="201"/>
    </location>
    <ligand>
        <name>uracil</name>
        <dbReference type="ChEBI" id="CHEBI:17568"/>
    </ligand>
</feature>
<feature type="binding site" evidence="1">
    <location>
        <position position="200"/>
    </location>
    <ligand>
        <name>5-phospho-alpha-D-ribose 1-diphosphate</name>
        <dbReference type="ChEBI" id="CHEBI:58017"/>
    </ligand>
</feature>
<reference key="1">
    <citation type="journal article" date="2001" name="J. Bacteriol.">
        <title>Genome of the bacterium Streptococcus pneumoniae strain R6.</title>
        <authorList>
            <person name="Hoskins J."/>
            <person name="Alborn W.E. Jr."/>
            <person name="Arnold J."/>
            <person name="Blaszczak L.C."/>
            <person name="Burgett S."/>
            <person name="DeHoff B.S."/>
            <person name="Estrem S.T."/>
            <person name="Fritz L."/>
            <person name="Fu D.-J."/>
            <person name="Fuller W."/>
            <person name="Geringer C."/>
            <person name="Gilmour R."/>
            <person name="Glass J.S."/>
            <person name="Khoja H."/>
            <person name="Kraft A.R."/>
            <person name="Lagace R.E."/>
            <person name="LeBlanc D.J."/>
            <person name="Lee L.N."/>
            <person name="Lefkowitz E.J."/>
            <person name="Lu J."/>
            <person name="Matsushima P."/>
            <person name="McAhren S.M."/>
            <person name="McHenney M."/>
            <person name="McLeaster K."/>
            <person name="Mundy C.W."/>
            <person name="Nicas T.I."/>
            <person name="Norris F.H."/>
            <person name="O'Gara M."/>
            <person name="Peery R.B."/>
            <person name="Robertson G.T."/>
            <person name="Rockey P."/>
            <person name="Sun P.-M."/>
            <person name="Winkler M.E."/>
            <person name="Yang Y."/>
            <person name="Young-Bellido M."/>
            <person name="Zhao G."/>
            <person name="Zook C.A."/>
            <person name="Baltz R.H."/>
            <person name="Jaskunas S.R."/>
            <person name="Rosteck P.R. Jr."/>
            <person name="Skatrud P.L."/>
            <person name="Glass J.I."/>
        </authorList>
    </citation>
    <scope>NUCLEOTIDE SEQUENCE [LARGE SCALE GENOMIC DNA]</scope>
    <source>
        <strain>ATCC BAA-255 / R6</strain>
    </source>
</reference>
<proteinExistence type="inferred from homology"/>
<sequence>MGKIEVINHPLIQHKLSILRRTDTSTKAFRELVDEIAMLMGYEVLRDLPLEDVEIETPITKTVQKQLAGKKLAIVPILRAGIGMVDGLLSLVPAAKVGHIGMYRDEETLQPVEYLVKLPEDIDQRQIFVVDPMLATGGSAILAVDSLKKRGASNIKFVCLVSAPEGVKALQEAHPDVEIFTAALDERLNEHGYIVPGLGDAGDRLFGTK</sequence>
<name>UPP_STRR6</name>
<protein>
    <recommendedName>
        <fullName evidence="1">Uracil phosphoribosyltransferase</fullName>
        <ecNumber evidence="1">2.4.2.9</ecNumber>
    </recommendedName>
    <alternativeName>
        <fullName evidence="1">UMP pyrophosphorylase</fullName>
    </alternativeName>
    <alternativeName>
        <fullName evidence="1">UPRTase</fullName>
    </alternativeName>
</protein>